<name>RS19_MESH7</name>
<gene>
    <name evidence="1" type="primary">rpsS</name>
    <name type="ordered locus">MHP7448_0190</name>
</gene>
<comment type="function">
    <text evidence="1">Protein S19 forms a complex with S13 that binds strongly to the 16S ribosomal RNA.</text>
</comment>
<comment type="similarity">
    <text evidence="1">Belongs to the universal ribosomal protein uS19 family.</text>
</comment>
<protein>
    <recommendedName>
        <fullName evidence="1">Small ribosomal subunit protein uS19</fullName>
    </recommendedName>
    <alternativeName>
        <fullName evidence="2">30S ribosomal protein S19</fullName>
    </alternativeName>
</protein>
<feature type="chain" id="PRO_0000265384" description="Small ribosomal subunit protein uS19">
    <location>
        <begin position="1"/>
        <end position="90"/>
    </location>
</feature>
<reference key="1">
    <citation type="journal article" date="2005" name="J. Bacteriol.">
        <title>Swine and poultry pathogens: the complete genome sequences of two strains of Mycoplasma hyopneumoniae and a strain of Mycoplasma synoviae.</title>
        <authorList>
            <person name="Vasconcelos A.T.R."/>
            <person name="Ferreira H.B."/>
            <person name="Bizarro C.V."/>
            <person name="Bonatto S.L."/>
            <person name="Carvalho M.O."/>
            <person name="Pinto P.M."/>
            <person name="Almeida D.F."/>
            <person name="Almeida L.G.P."/>
            <person name="Almeida R."/>
            <person name="Alves-Junior L."/>
            <person name="Assuncao E.N."/>
            <person name="Azevedo V.A.C."/>
            <person name="Bogo M.R."/>
            <person name="Brigido M.M."/>
            <person name="Brocchi M."/>
            <person name="Burity H.A."/>
            <person name="Camargo A.A."/>
            <person name="Camargo S.S."/>
            <person name="Carepo M.S."/>
            <person name="Carraro D.M."/>
            <person name="de Mattos Cascardo J.C."/>
            <person name="Castro L.A."/>
            <person name="Cavalcanti G."/>
            <person name="Chemale G."/>
            <person name="Collevatti R.G."/>
            <person name="Cunha C.W."/>
            <person name="Dallagiovanna B."/>
            <person name="Dambros B.P."/>
            <person name="Dellagostin O.A."/>
            <person name="Falcao C."/>
            <person name="Fantinatti-Garboggini F."/>
            <person name="Felipe M.S.S."/>
            <person name="Fiorentin L."/>
            <person name="Franco G.R."/>
            <person name="Freitas N.S.A."/>
            <person name="Frias D."/>
            <person name="Grangeiro T.B."/>
            <person name="Grisard E.C."/>
            <person name="Guimaraes C.T."/>
            <person name="Hungria M."/>
            <person name="Jardim S.N."/>
            <person name="Krieger M.A."/>
            <person name="Laurino J.P."/>
            <person name="Lima L.F.A."/>
            <person name="Lopes M.I."/>
            <person name="Loreto E.L.S."/>
            <person name="Madeira H.M.F."/>
            <person name="Manfio G.P."/>
            <person name="Maranhao A.Q."/>
            <person name="Martinkovics C.T."/>
            <person name="Medeiros S.R.B."/>
            <person name="Moreira M.A.M."/>
            <person name="Neiva M."/>
            <person name="Ramalho-Neto C.E."/>
            <person name="Nicolas M.F."/>
            <person name="Oliveira S.C."/>
            <person name="Paixao R.F.C."/>
            <person name="Pedrosa F.O."/>
            <person name="Pena S.D.J."/>
            <person name="Pereira M."/>
            <person name="Pereira-Ferrari L."/>
            <person name="Piffer I."/>
            <person name="Pinto L.S."/>
            <person name="Potrich D.P."/>
            <person name="Salim A.C.M."/>
            <person name="Santos F.R."/>
            <person name="Schmitt R."/>
            <person name="Schneider M.P.C."/>
            <person name="Schrank A."/>
            <person name="Schrank I.S."/>
            <person name="Schuck A.F."/>
            <person name="Seuanez H.N."/>
            <person name="Silva D.W."/>
            <person name="Silva R."/>
            <person name="Silva S.C."/>
            <person name="Soares C.M.A."/>
            <person name="Souza K.R.L."/>
            <person name="Souza R.C."/>
            <person name="Staats C.C."/>
            <person name="Steffens M.B.R."/>
            <person name="Teixeira S.M.R."/>
            <person name="Urmenyi T.P."/>
            <person name="Vainstein M.H."/>
            <person name="Zuccherato L.W."/>
            <person name="Simpson A.J.G."/>
            <person name="Zaha A."/>
        </authorList>
    </citation>
    <scope>NUCLEOTIDE SEQUENCE [LARGE SCALE GENOMIC DNA]</scope>
    <source>
        <strain>7448</strain>
    </source>
</reference>
<proteinExistence type="inferred from homology"/>
<sequence>MARSLKKGPFADDHLLKKVDEAIAKNSRKPIKTWSRRSTIFPQFVGLTFLVHNGKIFNEVYVTDDMVGHKLGEFSPTRTYHGHGKDKAKK</sequence>
<accession>Q4A8H5</accession>
<dbReference type="EMBL" id="AE017244">
    <property type="protein sequence ID" value="AAZ53564.1"/>
    <property type="molecule type" value="Genomic_DNA"/>
</dbReference>
<dbReference type="RefSeq" id="WP_011206028.1">
    <property type="nucleotide sequence ID" value="NC_007332.1"/>
</dbReference>
<dbReference type="SMR" id="Q4A8H5"/>
<dbReference type="GeneID" id="41334489"/>
<dbReference type="KEGG" id="mhp:MHP7448_0190"/>
<dbReference type="HOGENOM" id="CLU_144911_0_1_14"/>
<dbReference type="Proteomes" id="UP000000553">
    <property type="component" value="Chromosome"/>
</dbReference>
<dbReference type="GO" id="GO:0005737">
    <property type="term" value="C:cytoplasm"/>
    <property type="evidence" value="ECO:0007669"/>
    <property type="project" value="UniProtKB-ARBA"/>
</dbReference>
<dbReference type="GO" id="GO:0015935">
    <property type="term" value="C:small ribosomal subunit"/>
    <property type="evidence" value="ECO:0007669"/>
    <property type="project" value="InterPro"/>
</dbReference>
<dbReference type="GO" id="GO:0019843">
    <property type="term" value="F:rRNA binding"/>
    <property type="evidence" value="ECO:0007669"/>
    <property type="project" value="UniProtKB-UniRule"/>
</dbReference>
<dbReference type="GO" id="GO:0003735">
    <property type="term" value="F:structural constituent of ribosome"/>
    <property type="evidence" value="ECO:0007669"/>
    <property type="project" value="InterPro"/>
</dbReference>
<dbReference type="GO" id="GO:0000028">
    <property type="term" value="P:ribosomal small subunit assembly"/>
    <property type="evidence" value="ECO:0007669"/>
    <property type="project" value="TreeGrafter"/>
</dbReference>
<dbReference type="GO" id="GO:0006412">
    <property type="term" value="P:translation"/>
    <property type="evidence" value="ECO:0007669"/>
    <property type="project" value="UniProtKB-UniRule"/>
</dbReference>
<dbReference type="FunFam" id="3.30.860.10:FF:000001">
    <property type="entry name" value="30S ribosomal protein S19"/>
    <property type="match status" value="1"/>
</dbReference>
<dbReference type="Gene3D" id="3.30.860.10">
    <property type="entry name" value="30s Ribosomal Protein S19, Chain A"/>
    <property type="match status" value="1"/>
</dbReference>
<dbReference type="HAMAP" id="MF_00531">
    <property type="entry name" value="Ribosomal_uS19"/>
    <property type="match status" value="1"/>
</dbReference>
<dbReference type="InterPro" id="IPR002222">
    <property type="entry name" value="Ribosomal_uS19"/>
</dbReference>
<dbReference type="InterPro" id="IPR005732">
    <property type="entry name" value="Ribosomal_uS19_bac-type"/>
</dbReference>
<dbReference type="InterPro" id="IPR020934">
    <property type="entry name" value="Ribosomal_uS19_CS"/>
</dbReference>
<dbReference type="InterPro" id="IPR023575">
    <property type="entry name" value="Ribosomal_uS19_SF"/>
</dbReference>
<dbReference type="NCBIfam" id="TIGR01050">
    <property type="entry name" value="rpsS_bact"/>
    <property type="match status" value="1"/>
</dbReference>
<dbReference type="PANTHER" id="PTHR11880">
    <property type="entry name" value="RIBOSOMAL PROTEIN S19P FAMILY MEMBER"/>
    <property type="match status" value="1"/>
</dbReference>
<dbReference type="PANTHER" id="PTHR11880:SF8">
    <property type="entry name" value="SMALL RIBOSOMAL SUBUNIT PROTEIN US19M"/>
    <property type="match status" value="1"/>
</dbReference>
<dbReference type="Pfam" id="PF00203">
    <property type="entry name" value="Ribosomal_S19"/>
    <property type="match status" value="1"/>
</dbReference>
<dbReference type="PIRSF" id="PIRSF002144">
    <property type="entry name" value="Ribosomal_S19"/>
    <property type="match status" value="1"/>
</dbReference>
<dbReference type="PRINTS" id="PR00975">
    <property type="entry name" value="RIBOSOMALS19"/>
</dbReference>
<dbReference type="SUPFAM" id="SSF54570">
    <property type="entry name" value="Ribosomal protein S19"/>
    <property type="match status" value="1"/>
</dbReference>
<dbReference type="PROSITE" id="PS00323">
    <property type="entry name" value="RIBOSOMAL_S19"/>
    <property type="match status" value="1"/>
</dbReference>
<evidence type="ECO:0000255" key="1">
    <source>
        <dbReference type="HAMAP-Rule" id="MF_00531"/>
    </source>
</evidence>
<evidence type="ECO:0000305" key="2"/>
<keyword id="KW-0687">Ribonucleoprotein</keyword>
<keyword id="KW-0689">Ribosomal protein</keyword>
<keyword id="KW-0694">RNA-binding</keyword>
<keyword id="KW-0699">rRNA-binding</keyword>
<organism>
    <name type="scientific">Mesomycoplasma hyopneumoniae (strain 7448)</name>
    <name type="common">Mycoplasma hyopneumoniae</name>
    <dbReference type="NCBI Taxonomy" id="262722"/>
    <lineage>
        <taxon>Bacteria</taxon>
        <taxon>Bacillati</taxon>
        <taxon>Mycoplasmatota</taxon>
        <taxon>Mycoplasmoidales</taxon>
        <taxon>Metamycoplasmataceae</taxon>
        <taxon>Mesomycoplasma</taxon>
    </lineage>
</organism>